<proteinExistence type="inferred from homology"/>
<keyword id="KW-0204">Cytolysis</keyword>
<keyword id="KW-0843">Virulence</keyword>
<sequence>MAIVGTIIKIIKAIIDIFAK</sequence>
<organism>
    <name type="scientific">Staphylococcus aureus (strain Mu50 / ATCC 700699)</name>
    <dbReference type="NCBI Taxonomy" id="158878"/>
    <lineage>
        <taxon>Bacteria</taxon>
        <taxon>Bacillati</taxon>
        <taxon>Bacillota</taxon>
        <taxon>Bacilli</taxon>
        <taxon>Bacillales</taxon>
        <taxon>Staphylococcaceae</taxon>
        <taxon>Staphylococcus</taxon>
    </lineage>
</organism>
<reference key="1">
    <citation type="journal article" date="2001" name="Lancet">
        <title>Whole genome sequencing of meticillin-resistant Staphylococcus aureus.</title>
        <authorList>
            <person name="Kuroda M."/>
            <person name="Ohta T."/>
            <person name="Uchiyama I."/>
            <person name="Baba T."/>
            <person name="Yuzawa H."/>
            <person name="Kobayashi I."/>
            <person name="Cui L."/>
            <person name="Oguchi A."/>
            <person name="Aoki K."/>
            <person name="Nagai Y."/>
            <person name="Lian J.-Q."/>
            <person name="Ito T."/>
            <person name="Kanamori M."/>
            <person name="Matsumaru H."/>
            <person name="Maruyama A."/>
            <person name="Murakami H."/>
            <person name="Hosoyama A."/>
            <person name="Mizutani-Ui Y."/>
            <person name="Takahashi N.K."/>
            <person name="Sawano T."/>
            <person name="Inoue R."/>
            <person name="Kaito C."/>
            <person name="Sekimizu K."/>
            <person name="Hirakawa H."/>
            <person name="Kuhara S."/>
            <person name="Goto S."/>
            <person name="Yabuzaki J."/>
            <person name="Kanehisa M."/>
            <person name="Yamashita A."/>
            <person name="Oshima K."/>
            <person name="Furuya K."/>
            <person name="Yoshino C."/>
            <person name="Shiba T."/>
            <person name="Hattori M."/>
            <person name="Ogasawara N."/>
            <person name="Hayashi H."/>
            <person name="Hiramatsu K."/>
        </authorList>
    </citation>
    <scope>NUCLEOTIDE SEQUENCE [LARGE SCALE GENOMIC DNA]</scope>
    <source>
        <strain>Mu50 / ATCC 700699</strain>
    </source>
</reference>
<dbReference type="EMBL" id="BA000017">
    <property type="status" value="NOT_ANNOTATED_CDS"/>
    <property type="molecule type" value="Genomic_DNA"/>
</dbReference>
<dbReference type="SMR" id="P0C823"/>
<dbReference type="Proteomes" id="UP000002481">
    <property type="component" value="Chromosome"/>
</dbReference>
<dbReference type="GO" id="GO:0031640">
    <property type="term" value="P:killing of cells of another organism"/>
    <property type="evidence" value="ECO:0007669"/>
    <property type="project" value="UniProtKB-KW"/>
</dbReference>
<dbReference type="InterPro" id="IPR031429">
    <property type="entry name" value="PSM_alpha"/>
</dbReference>
<dbReference type="Pfam" id="PF17063">
    <property type="entry name" value="PSMalpha"/>
    <property type="match status" value="1"/>
</dbReference>
<evidence type="ECO:0000250" key="1">
    <source>
        <dbReference type="UniProtKB" id="A9JX08"/>
    </source>
</evidence>
<evidence type="ECO:0000305" key="2"/>
<feature type="peptide" id="PRO_0000345079" description="Phenol-soluble modulin alpha 4 peptide">
    <location>
        <begin position="1"/>
        <end position="20"/>
    </location>
</feature>
<protein>
    <recommendedName>
        <fullName>Phenol-soluble modulin alpha 4 peptide</fullName>
    </recommendedName>
</protein>
<accession>P0C823</accession>
<comment type="function">
    <text evidence="1">Peptide which can recruit, activate and subsequently lyse human neutrophils, thus eliminating the main cellular defense against infection.</text>
</comment>
<comment type="similarity">
    <text evidence="2">Belongs to the phenol-soluble modulin alpha peptides family.</text>
</comment>
<gene>
    <name type="primary">psmA4</name>
    <name type="ordered locus">SAV0451.1</name>
</gene>
<name>PSMA4_STAAM</name>